<proteinExistence type="predicted"/>
<protein>
    <recommendedName>
        <fullName>Protein DipZ</fullName>
    </recommendedName>
</protein>
<accession>P9WG62</accession>
<accession>L0TB47</accession>
<accession>Q10801</accession>
<feature type="chain" id="PRO_0000428417" description="Protein DipZ">
    <location>
        <begin position="1"/>
        <end position="695"/>
    </location>
</feature>
<feature type="transmembrane region" description="Helical" evidence="1">
    <location>
        <begin position="123"/>
        <end position="143"/>
    </location>
</feature>
<feature type="transmembrane region" description="Helical" evidence="1">
    <location>
        <begin position="179"/>
        <end position="199"/>
    </location>
</feature>
<feature type="transmembrane region" description="Helical" evidence="1">
    <location>
        <begin position="205"/>
        <end position="225"/>
    </location>
</feature>
<feature type="transmembrane region" description="Helical" evidence="1">
    <location>
        <begin position="254"/>
        <end position="274"/>
    </location>
</feature>
<feature type="transmembrane region" description="Helical" evidence="1">
    <location>
        <begin position="285"/>
        <end position="305"/>
    </location>
</feature>
<feature type="transmembrane region" description="Helical" evidence="1">
    <location>
        <begin position="325"/>
        <end position="345"/>
    </location>
</feature>
<feature type="domain" description="Thioredoxin" evidence="2">
    <location>
        <begin position="394"/>
        <end position="542"/>
    </location>
</feature>
<reference key="1">
    <citation type="journal article" date="2002" name="J. Bacteriol.">
        <title>Whole-genome comparison of Mycobacterium tuberculosis clinical and laboratory strains.</title>
        <authorList>
            <person name="Fleischmann R.D."/>
            <person name="Alland D."/>
            <person name="Eisen J.A."/>
            <person name="Carpenter L."/>
            <person name="White O."/>
            <person name="Peterson J.D."/>
            <person name="DeBoy R.T."/>
            <person name="Dodson R.J."/>
            <person name="Gwinn M.L."/>
            <person name="Haft D.H."/>
            <person name="Hickey E.K."/>
            <person name="Kolonay J.F."/>
            <person name="Nelson W.C."/>
            <person name="Umayam L.A."/>
            <person name="Ermolaeva M.D."/>
            <person name="Salzberg S.L."/>
            <person name="Delcher A."/>
            <person name="Utterback T.R."/>
            <person name="Weidman J.F."/>
            <person name="Khouri H.M."/>
            <person name="Gill J."/>
            <person name="Mikula A."/>
            <person name="Bishai W."/>
            <person name="Jacobs W.R. Jr."/>
            <person name="Venter J.C."/>
            <person name="Fraser C.M."/>
        </authorList>
    </citation>
    <scope>NUCLEOTIDE SEQUENCE [LARGE SCALE GENOMIC DNA]</scope>
    <source>
        <strain>CDC 1551 / Oshkosh</strain>
    </source>
</reference>
<sequence length="695" mass="74120">MVESRRAAAAASAYASRCGIAPATSQRSLATPPTISVPSGEGRCRCHVARGAGRDPRRRLRRRRWCGRCGYHSHLTGGEFDVNRLCQQRSRERSCQLVAVPADPRPKRQRITDVLTLALVGFLGGLITGISPCILPVLPVIFFSGAQSVDAAQVAKPEGAVAVRRKRALSATLRPYRVIGGLVLSFGMVTLLGSALLSVLHLPQDAIRWAALVALVAIGAGLIFPRFEQLLEKPFSRIPQKQIVTRSNGFGLGLALGVLYVPCAGPILAAIVVAGATATIGLGTVVLTATFALGAALPLLFFALAGQRIAERVGAFRRRQREIRIATGSVTILLAVALVFDLPAALQRAIPDYTASLQQQISTGTEIREQLNLGGIVNAQNAQLSNCSDGAAQLESCGTAPDLKGITGWLNTPGNKPIDLKSLRGKVVLIDFWAYSCINCQRAIPHVVGWYQAYKDSGLAVIGVHTPEYAFEKVPGNVAKGAANLGISYPIALDNNYATWTNYRNRYWPAEYLIDATGTVRHIKFGEGDYNVTETLVRQLLNDAKPGVKLPQPSSTTTPDLTPRAALTPETYFGVGKVVNYGGGGAYDEGSAVFDYPPSLAANSFALRGRWALDYQGATSDGNDAAIKLNYHAKDVYIVVGGTGTLTVVRDGKPATLPISGPPTTHQVVAGDRLASETLEVRPSKGLQVFSFTYG</sequence>
<evidence type="ECO:0000255" key="1"/>
<evidence type="ECO:0000255" key="2">
    <source>
        <dbReference type="PROSITE-ProRule" id="PRU00691"/>
    </source>
</evidence>
<evidence type="ECO:0000305" key="3"/>
<dbReference type="EMBL" id="AE000516">
    <property type="protein sequence ID" value="AAK47267.1"/>
    <property type="molecule type" value="Genomic_DNA"/>
</dbReference>
<dbReference type="PIR" id="E70923">
    <property type="entry name" value="E70923"/>
</dbReference>
<dbReference type="SMR" id="P9WG62"/>
<dbReference type="KEGG" id="mtc:MT2942"/>
<dbReference type="PATRIC" id="fig|83331.31.peg.3179"/>
<dbReference type="HOGENOM" id="CLU_033708_0_0_11"/>
<dbReference type="Proteomes" id="UP000001020">
    <property type="component" value="Chromosome"/>
</dbReference>
<dbReference type="GO" id="GO:0005886">
    <property type="term" value="C:plasma membrane"/>
    <property type="evidence" value="ECO:0007669"/>
    <property type="project" value="UniProtKB-SubCell"/>
</dbReference>
<dbReference type="GO" id="GO:0016209">
    <property type="term" value="F:antioxidant activity"/>
    <property type="evidence" value="ECO:0007669"/>
    <property type="project" value="InterPro"/>
</dbReference>
<dbReference type="GO" id="GO:0016491">
    <property type="term" value="F:oxidoreductase activity"/>
    <property type="evidence" value="ECO:0007669"/>
    <property type="project" value="InterPro"/>
</dbReference>
<dbReference type="GO" id="GO:0017004">
    <property type="term" value="P:cytochrome complex assembly"/>
    <property type="evidence" value="ECO:0007669"/>
    <property type="project" value="InterPro"/>
</dbReference>
<dbReference type="CDD" id="cd03012">
    <property type="entry name" value="TlpA_like_DipZ_like"/>
    <property type="match status" value="1"/>
</dbReference>
<dbReference type="Gene3D" id="2.60.120.260">
    <property type="entry name" value="Galactose-binding domain-like"/>
    <property type="match status" value="1"/>
</dbReference>
<dbReference type="Gene3D" id="3.40.30.10">
    <property type="entry name" value="Glutaredoxin"/>
    <property type="match status" value="1"/>
</dbReference>
<dbReference type="InterPro" id="IPR000866">
    <property type="entry name" value="AhpC/TSA"/>
</dbReference>
<dbReference type="InterPro" id="IPR003834">
    <property type="entry name" value="Cyt_c_assmbl_TM_dom"/>
</dbReference>
<dbReference type="InterPro" id="IPR036249">
    <property type="entry name" value="Thioredoxin-like_sf"/>
</dbReference>
<dbReference type="InterPro" id="IPR041017">
    <property type="entry name" value="Thioredoxin_10"/>
</dbReference>
<dbReference type="InterPro" id="IPR013766">
    <property type="entry name" value="Thioredoxin_domain"/>
</dbReference>
<dbReference type="InterPro" id="IPR050553">
    <property type="entry name" value="Thioredoxin_ResA/DsbE_sf"/>
</dbReference>
<dbReference type="PANTHER" id="PTHR42852:SF13">
    <property type="entry name" value="PROTEIN DIPZ"/>
    <property type="match status" value="1"/>
</dbReference>
<dbReference type="PANTHER" id="PTHR42852">
    <property type="entry name" value="THIOL:DISULFIDE INTERCHANGE PROTEIN DSBE"/>
    <property type="match status" value="1"/>
</dbReference>
<dbReference type="Pfam" id="PF00578">
    <property type="entry name" value="AhpC-TSA"/>
    <property type="match status" value="1"/>
</dbReference>
<dbReference type="Pfam" id="PF02683">
    <property type="entry name" value="DsbD_TM"/>
    <property type="match status" value="1"/>
</dbReference>
<dbReference type="Pfam" id="PF17991">
    <property type="entry name" value="Thioredoxin_10"/>
    <property type="match status" value="1"/>
</dbReference>
<dbReference type="SUPFAM" id="SSF52833">
    <property type="entry name" value="Thioredoxin-like"/>
    <property type="match status" value="1"/>
</dbReference>
<dbReference type="PROSITE" id="PS51352">
    <property type="entry name" value="THIOREDOXIN_2"/>
    <property type="match status" value="1"/>
</dbReference>
<organism>
    <name type="scientific">Mycobacterium tuberculosis (strain CDC 1551 / Oshkosh)</name>
    <dbReference type="NCBI Taxonomy" id="83331"/>
    <lineage>
        <taxon>Bacteria</taxon>
        <taxon>Bacillati</taxon>
        <taxon>Actinomycetota</taxon>
        <taxon>Actinomycetes</taxon>
        <taxon>Mycobacteriales</taxon>
        <taxon>Mycobacteriaceae</taxon>
        <taxon>Mycobacterium</taxon>
        <taxon>Mycobacterium tuberculosis complex</taxon>
    </lineage>
</organism>
<comment type="subcellular location">
    <subcellularLocation>
        <location evidence="3">Cell membrane</location>
        <topology evidence="3">Multi-pass membrane protein</topology>
    </subcellularLocation>
</comment>
<keyword id="KW-1003">Cell membrane</keyword>
<keyword id="KW-0472">Membrane</keyword>
<keyword id="KW-1185">Reference proteome</keyword>
<keyword id="KW-0812">Transmembrane</keyword>
<keyword id="KW-1133">Transmembrane helix</keyword>
<name>DIPZ_MYCTO</name>
<gene>
    <name type="primary">dipZ</name>
    <name type="ordered locus">MT2942</name>
</gene>